<accession>C4R7X8</accession>
<name>BMT2_KOMPG</name>
<sequence length="644" mass="74561">MRTRLNFLLLCIASVLSVIWIGVLLTWNDNNLGGISLNGGKDSAYDDLLSLGSFNDMEVDSYVTNIYDNAPVLGCTDLSYHGLLKVTPKHDLACDLEFIRAQILDIDVYSAIKDLEDKALTVKQKVEKHWFTFYGSSVFLPEHDVHYLVRRVIFSAEGKANSPVTSIIVAQIYDKNWNELNGHFLDILNPNTGKVQHNTFPQVLPIATNFVKGKKFRGAEDPRVVLRKGRFGPDPLVMFNSLTQDNKRRRIFTISPFDQFKTVMYDIKDYEMPRYEKNWVPFFLKDNQEAVHFVYSFNPLRVLKCSLDDGSCDIVFEIPKVDSMSSELRGATPMINLPQAIPMAKDKEIWVSFPRTRIANCGCSRTTYRPMLMLFVREGSNFFVELLSTSLDFGLEVLPYSGNGLPCSADHSVLIPNSIDNWEVVDSNGDDILTLSFSEADKSTSVIHIRGLYNYLSELDGYQGPEAEDEHNFQRILSDLHFDNKTTVNNFIKVQSCALDAAKGYCKEYGLTRGEAERRRRVAEERKKKEKEEEEKKKKKEKEEEEKKRIEEEKKKIEEKERKEKEKEEAERKKLQEMKKKLEEITEKLEKGQRNKEIDPKEKQREEEERKERVRKIAEKQRKEAEKKEAEKKANDKKDLKIRQ</sequence>
<evidence type="ECO:0000255" key="1"/>
<evidence type="ECO:0000256" key="2">
    <source>
        <dbReference type="SAM" id="MobiDB-lite"/>
    </source>
</evidence>
<evidence type="ECO:0000269" key="3">
    <source>
    </source>
</evidence>
<evidence type="ECO:0000269" key="4">
    <source>
    </source>
</evidence>
<evidence type="ECO:0000305" key="5"/>
<feature type="chain" id="PRO_0000426100" description="Beta-mannosyltransferase 2">
    <location>
        <begin position="1"/>
        <end position="644"/>
    </location>
</feature>
<feature type="topological domain" description="Cytoplasmic" evidence="1">
    <location>
        <begin position="1"/>
        <end position="6"/>
    </location>
</feature>
<feature type="transmembrane region" description="Helical" evidence="1">
    <location>
        <begin position="7"/>
        <end position="27"/>
    </location>
</feature>
<feature type="topological domain" description="Extracellular" evidence="1">
    <location>
        <begin position="28"/>
        <end position="644"/>
    </location>
</feature>
<feature type="region of interest" description="Disordered" evidence="2">
    <location>
        <begin position="517"/>
        <end position="644"/>
    </location>
</feature>
<feature type="coiled-coil region" evidence="1">
    <location>
        <begin position="512"/>
        <end position="644"/>
    </location>
</feature>
<feature type="glycosylation site" description="N-linked (GlcNAc...) asparagine" evidence="1">
    <location>
        <position position="484"/>
    </location>
</feature>
<proteinExistence type="inferred from homology"/>
<reference key="1">
    <citation type="journal article" date="2009" name="Nat. Biotechnol.">
        <title>Genome sequence of the recombinant protein production host Pichia pastoris.</title>
        <authorList>
            <person name="De Schutter K."/>
            <person name="Lin Y.-C."/>
            <person name="Tiels P."/>
            <person name="Van Hecke A."/>
            <person name="Glinka S."/>
            <person name="Weber-Lehmann J."/>
            <person name="Rouze P."/>
            <person name="Van de Peer Y."/>
            <person name="Callewaert N."/>
        </authorList>
    </citation>
    <scope>NUCLEOTIDE SEQUENCE [LARGE SCALE GENOMIC DNA]</scope>
    <source>
        <strain>GS115 / ATCC 20864</strain>
    </source>
</reference>
<reference key="2">
    <citation type="journal article" date="2008" name="J. Biol. Chem.">
        <title>Identification of a new family of genes involved in beta-1,2-mannosylation of glycans in Pichia pastoris and Candida albicans.</title>
        <authorList>
            <person name="Mille C."/>
            <person name="Bobrowicz P."/>
            <person name="Trinel P.A."/>
            <person name="Li H."/>
            <person name="Maes E."/>
            <person name="Guerardel Y."/>
            <person name="Fradin C."/>
            <person name="Martinez-Esparza M."/>
            <person name="Davidson R.C."/>
            <person name="Janbon G."/>
            <person name="Poulain D."/>
            <person name="Wildt S."/>
        </authorList>
    </citation>
    <scope>IDENTIFICATION</scope>
    <scope>DISRUPTION PHENOTYPE</scope>
    <scope>FUNCTION</scope>
</reference>
<reference key="3">
    <citation type="journal article" date="2011" name="Glycobiology">
        <title>Elimination of beta-mannose glycan structures in Pichia pastoris.</title>
        <authorList>
            <person name="Hopkins D."/>
            <person name="Gomathinayagam S."/>
            <person name="Rittenhour A.M."/>
            <person name="Du M."/>
            <person name="Hoyt E."/>
            <person name="Karaveg K."/>
            <person name="Mitchell T."/>
            <person name="Nett J.H."/>
            <person name="Sharkey N.J."/>
            <person name="Stadheim T.A."/>
            <person name="Li H."/>
            <person name="Hamilton S.R."/>
        </authorList>
    </citation>
    <scope>FUNCTION</scope>
    <scope>DISRUPTION PHENOTYPE</scope>
</reference>
<comment type="function">
    <text evidence="3 4">Beta-mannosyltransferase involved in cell wall biosynthesis. Initiates the beta-mannosylation of core N-linked glycans.</text>
</comment>
<comment type="subcellular location">
    <subcellularLocation>
        <location evidence="5">Membrane</location>
        <topology evidence="5">Single-pass type II membrane protein</topology>
    </subcellularLocation>
</comment>
<comment type="disruption phenotype">
    <text evidence="3 4">Strongly reduces de degree of mannosylation of the core glycans and eliminates glycans resistant to alpha-1,2-mannosidase treatment.</text>
</comment>
<comment type="similarity">
    <text evidence="5">Belongs to the BMT family.</text>
</comment>
<keyword id="KW-0961">Cell wall biogenesis/degradation</keyword>
<keyword id="KW-0175">Coiled coil</keyword>
<keyword id="KW-0325">Glycoprotein</keyword>
<keyword id="KW-0328">Glycosyltransferase</keyword>
<keyword id="KW-0472">Membrane</keyword>
<keyword id="KW-1185">Reference proteome</keyword>
<keyword id="KW-0735">Signal-anchor</keyword>
<keyword id="KW-0808">Transferase</keyword>
<keyword id="KW-0812">Transmembrane</keyword>
<keyword id="KW-1133">Transmembrane helix</keyword>
<dbReference type="EC" id="2.4.1.-"/>
<dbReference type="EMBL" id="FN392322">
    <property type="protein sequence ID" value="CAY71703.1"/>
    <property type="molecule type" value="Genomic_DNA"/>
</dbReference>
<dbReference type="RefSeq" id="XP_002493882.1">
    <property type="nucleotide sequence ID" value="XM_002493837.1"/>
</dbReference>
<dbReference type="SMR" id="C4R7X8"/>
<dbReference type="CAZy" id="GT91">
    <property type="family name" value="Glycosyltransferase Family 91"/>
</dbReference>
<dbReference type="GlyCosmos" id="C4R7X8">
    <property type="glycosylation" value="1 site, No reported glycans"/>
</dbReference>
<dbReference type="EnsemblFungi" id="CAY71703">
    <property type="protein sequence ID" value="CAY71703"/>
    <property type="gene ID" value="PAS_chr4_0450"/>
</dbReference>
<dbReference type="GeneID" id="8201399"/>
<dbReference type="KEGG" id="ppa:PAS_chr4_0450"/>
<dbReference type="eggNOG" id="ENOG502QTZG">
    <property type="taxonomic scope" value="Eukaryota"/>
</dbReference>
<dbReference type="HOGENOM" id="CLU_013841_2_1_1"/>
<dbReference type="InParanoid" id="C4R7X8"/>
<dbReference type="OMA" id="MVNRIVY"/>
<dbReference type="OrthoDB" id="3631276at2759"/>
<dbReference type="Proteomes" id="UP000000314">
    <property type="component" value="Chromosome 4"/>
</dbReference>
<dbReference type="GO" id="GO:0016020">
    <property type="term" value="C:membrane"/>
    <property type="evidence" value="ECO:0007669"/>
    <property type="project" value="UniProtKB-SubCell"/>
</dbReference>
<dbReference type="GO" id="GO:0015630">
    <property type="term" value="C:microtubule cytoskeleton"/>
    <property type="evidence" value="ECO:0007669"/>
    <property type="project" value="TreeGrafter"/>
</dbReference>
<dbReference type="GO" id="GO:0000030">
    <property type="term" value="F:mannosyltransferase activity"/>
    <property type="evidence" value="ECO:0007669"/>
    <property type="project" value="InterPro"/>
</dbReference>
<dbReference type="GO" id="GO:0071555">
    <property type="term" value="P:cell wall organization"/>
    <property type="evidence" value="ECO:0007669"/>
    <property type="project" value="UniProtKB-KW"/>
</dbReference>
<dbReference type="GO" id="GO:0000226">
    <property type="term" value="P:microtubule cytoskeleton organization"/>
    <property type="evidence" value="ECO:0007669"/>
    <property type="project" value="TreeGrafter"/>
</dbReference>
<dbReference type="InterPro" id="IPR021988">
    <property type="entry name" value="BMT1"/>
</dbReference>
<dbReference type="InterPro" id="IPR051483">
    <property type="entry name" value="MAP7_domain-containing"/>
</dbReference>
<dbReference type="PANTHER" id="PTHR15073">
    <property type="entry name" value="MICROTUBULE-ASSOCIATED PROTEIN"/>
    <property type="match status" value="1"/>
</dbReference>
<dbReference type="PANTHER" id="PTHR15073:SF1">
    <property type="entry name" value="RETICULOCYTE-BINDING PROTEIN HOMOLOG 2A"/>
    <property type="match status" value="1"/>
</dbReference>
<dbReference type="Pfam" id="PF12141">
    <property type="entry name" value="BMT"/>
    <property type="match status" value="2"/>
</dbReference>
<organism>
    <name type="scientific">Komagataella phaffii (strain GS115 / ATCC 20864)</name>
    <name type="common">Yeast</name>
    <name type="synonym">Pichia pastoris</name>
    <dbReference type="NCBI Taxonomy" id="644223"/>
    <lineage>
        <taxon>Eukaryota</taxon>
        <taxon>Fungi</taxon>
        <taxon>Dikarya</taxon>
        <taxon>Ascomycota</taxon>
        <taxon>Saccharomycotina</taxon>
        <taxon>Pichiomycetes</taxon>
        <taxon>Pichiales</taxon>
        <taxon>Pichiaceae</taxon>
        <taxon>Komagataella</taxon>
    </lineage>
</organism>
<gene>
    <name type="primary">BMT2</name>
    <name type="ordered locus">PAS_chr4_0450</name>
</gene>
<protein>
    <recommendedName>
        <fullName>Beta-mannosyltransferase 2</fullName>
        <ecNumber>2.4.1.-</ecNumber>
    </recommendedName>
</protein>